<sequence>MRVLVVDDSALVRMAVTDILTKAGIEVVDTAKNGREAVEKALKLKPDVITLDINMPEMDGLTALKLIMEKQPTPVVMLSSLTKEGARETLEALKIGAVDFVTKPDGALVDLSSVAQELVRKVQMAASTSLNVLRLQNLKKIKGEVVRGNWKGKTKDVCVLIGSSTGGPSALEMIIPRLPADIPAPVFVVQHMPPGFTKQLAERLNSISEVEVKEAENNERVKDGVVYVAPGGYHMKVRRAANVVRIKVVDGEPVNAVKPSVDVTADSVVQAYGGNVVGAILTGMGEDGAYGMKLIKDRGGLTIASSEDTCMVFGMPKAAIELGGITSVKPVFEIAEEIVRFLEVKLNER</sequence>
<name>CHEB_ARCFU</name>
<accession>O29221</accession>
<dbReference type="EC" id="3.1.1.61" evidence="1"/>
<dbReference type="EC" id="3.5.1.44" evidence="1"/>
<dbReference type="EMBL" id="AE000782">
    <property type="protein sequence ID" value="AAB90199.1"/>
    <property type="molecule type" value="Genomic_DNA"/>
</dbReference>
<dbReference type="PIR" id="A69380">
    <property type="entry name" value="A69380"/>
</dbReference>
<dbReference type="RefSeq" id="WP_010878541.1">
    <property type="nucleotide sequence ID" value="NC_000917.1"/>
</dbReference>
<dbReference type="SMR" id="O29221"/>
<dbReference type="STRING" id="224325.AF_1041"/>
<dbReference type="PaxDb" id="224325-AF_1041"/>
<dbReference type="EnsemblBacteria" id="AAB90199">
    <property type="protein sequence ID" value="AAB90199"/>
    <property type="gene ID" value="AF_1041"/>
</dbReference>
<dbReference type="GeneID" id="1484264"/>
<dbReference type="KEGG" id="afu:AF_1041"/>
<dbReference type="eggNOG" id="arCOG02382">
    <property type="taxonomic scope" value="Archaea"/>
</dbReference>
<dbReference type="HOGENOM" id="CLU_000445_51_0_2"/>
<dbReference type="OrthoDB" id="2857at2157"/>
<dbReference type="PhylomeDB" id="O29221"/>
<dbReference type="Proteomes" id="UP000002199">
    <property type="component" value="Chromosome"/>
</dbReference>
<dbReference type="GO" id="GO:0005737">
    <property type="term" value="C:cytoplasm"/>
    <property type="evidence" value="ECO:0007669"/>
    <property type="project" value="UniProtKB-SubCell"/>
</dbReference>
<dbReference type="GO" id="GO:0000156">
    <property type="term" value="F:phosphorelay response regulator activity"/>
    <property type="evidence" value="ECO:0007669"/>
    <property type="project" value="InterPro"/>
</dbReference>
<dbReference type="GO" id="GO:0008984">
    <property type="term" value="F:protein-glutamate methylesterase activity"/>
    <property type="evidence" value="ECO:0007669"/>
    <property type="project" value="UniProtKB-UniRule"/>
</dbReference>
<dbReference type="GO" id="GO:0050568">
    <property type="term" value="F:protein-glutamine glutaminase activity"/>
    <property type="evidence" value="ECO:0007669"/>
    <property type="project" value="UniProtKB-UniRule"/>
</dbReference>
<dbReference type="GO" id="GO:0006935">
    <property type="term" value="P:chemotaxis"/>
    <property type="evidence" value="ECO:0007669"/>
    <property type="project" value="UniProtKB-UniRule"/>
</dbReference>
<dbReference type="CDD" id="cd16432">
    <property type="entry name" value="CheB_Rec"/>
    <property type="match status" value="1"/>
</dbReference>
<dbReference type="CDD" id="cd17541">
    <property type="entry name" value="REC_CheB-like"/>
    <property type="match status" value="1"/>
</dbReference>
<dbReference type="Gene3D" id="3.40.50.2300">
    <property type="match status" value="1"/>
</dbReference>
<dbReference type="Gene3D" id="3.40.50.180">
    <property type="entry name" value="Methylesterase CheB, C-terminal domain"/>
    <property type="match status" value="1"/>
</dbReference>
<dbReference type="HAMAP" id="MF_00099">
    <property type="entry name" value="CheB_chemtxs"/>
    <property type="match status" value="1"/>
</dbReference>
<dbReference type="InterPro" id="IPR008248">
    <property type="entry name" value="CheB-like"/>
</dbReference>
<dbReference type="InterPro" id="IPR035909">
    <property type="entry name" value="CheB_C"/>
</dbReference>
<dbReference type="InterPro" id="IPR011006">
    <property type="entry name" value="CheY-like_superfamily"/>
</dbReference>
<dbReference type="InterPro" id="IPR000673">
    <property type="entry name" value="Sig_transdc_resp-reg_Me-estase"/>
</dbReference>
<dbReference type="InterPro" id="IPR001789">
    <property type="entry name" value="Sig_transdc_resp-reg_receiver"/>
</dbReference>
<dbReference type="NCBIfam" id="NF001965">
    <property type="entry name" value="PRK00742.1"/>
    <property type="match status" value="1"/>
</dbReference>
<dbReference type="NCBIfam" id="NF009206">
    <property type="entry name" value="PRK12555.1"/>
    <property type="match status" value="1"/>
</dbReference>
<dbReference type="PANTHER" id="PTHR42872">
    <property type="entry name" value="PROTEIN-GLUTAMATE METHYLESTERASE/PROTEIN-GLUTAMINE GLUTAMINASE"/>
    <property type="match status" value="1"/>
</dbReference>
<dbReference type="PANTHER" id="PTHR42872:SF6">
    <property type="entry name" value="PROTEIN-GLUTAMATE METHYLESTERASE_PROTEIN-GLUTAMINE GLUTAMINASE"/>
    <property type="match status" value="1"/>
</dbReference>
<dbReference type="Pfam" id="PF01339">
    <property type="entry name" value="CheB_methylest"/>
    <property type="match status" value="1"/>
</dbReference>
<dbReference type="Pfam" id="PF00072">
    <property type="entry name" value="Response_reg"/>
    <property type="match status" value="1"/>
</dbReference>
<dbReference type="PIRSF" id="PIRSF000876">
    <property type="entry name" value="RR_chemtxs_CheB"/>
    <property type="match status" value="1"/>
</dbReference>
<dbReference type="SMART" id="SM00448">
    <property type="entry name" value="REC"/>
    <property type="match status" value="1"/>
</dbReference>
<dbReference type="SUPFAM" id="SSF52172">
    <property type="entry name" value="CheY-like"/>
    <property type="match status" value="1"/>
</dbReference>
<dbReference type="SUPFAM" id="SSF52738">
    <property type="entry name" value="Methylesterase CheB, C-terminal domain"/>
    <property type="match status" value="1"/>
</dbReference>
<dbReference type="PROSITE" id="PS50122">
    <property type="entry name" value="CHEB"/>
    <property type="match status" value="1"/>
</dbReference>
<dbReference type="PROSITE" id="PS50110">
    <property type="entry name" value="RESPONSE_REGULATORY"/>
    <property type="match status" value="1"/>
</dbReference>
<reference key="1">
    <citation type="journal article" date="1997" name="Nature">
        <title>The complete genome sequence of the hyperthermophilic, sulphate-reducing archaeon Archaeoglobus fulgidus.</title>
        <authorList>
            <person name="Klenk H.-P."/>
            <person name="Clayton R.A."/>
            <person name="Tomb J.-F."/>
            <person name="White O."/>
            <person name="Nelson K.E."/>
            <person name="Ketchum K.A."/>
            <person name="Dodson R.J."/>
            <person name="Gwinn M.L."/>
            <person name="Hickey E.K."/>
            <person name="Peterson J.D."/>
            <person name="Richardson D.L."/>
            <person name="Kerlavage A.R."/>
            <person name="Graham D.E."/>
            <person name="Kyrpides N.C."/>
            <person name="Fleischmann R.D."/>
            <person name="Quackenbush J."/>
            <person name="Lee N.H."/>
            <person name="Sutton G.G."/>
            <person name="Gill S.R."/>
            <person name="Kirkness E.F."/>
            <person name="Dougherty B.A."/>
            <person name="McKenney K."/>
            <person name="Adams M.D."/>
            <person name="Loftus B.J."/>
            <person name="Peterson S.N."/>
            <person name="Reich C.I."/>
            <person name="McNeil L.K."/>
            <person name="Badger J.H."/>
            <person name="Glodek A."/>
            <person name="Zhou L."/>
            <person name="Overbeek R."/>
            <person name="Gocayne J.D."/>
            <person name="Weidman J.F."/>
            <person name="McDonald L.A."/>
            <person name="Utterback T.R."/>
            <person name="Cotton M.D."/>
            <person name="Spriggs T."/>
            <person name="Artiach P."/>
            <person name="Kaine B.P."/>
            <person name="Sykes S.M."/>
            <person name="Sadow P.W."/>
            <person name="D'Andrea K.P."/>
            <person name="Bowman C."/>
            <person name="Fujii C."/>
            <person name="Garland S.A."/>
            <person name="Mason T.M."/>
            <person name="Olsen G.J."/>
            <person name="Fraser C.M."/>
            <person name="Smith H.O."/>
            <person name="Woese C.R."/>
            <person name="Venter J.C."/>
        </authorList>
    </citation>
    <scope>NUCLEOTIDE SEQUENCE [LARGE SCALE GENOMIC DNA]</scope>
    <source>
        <strain>ATCC 49558 / DSM 4304 / JCM 9628 / NBRC 100126 / VC-16</strain>
    </source>
</reference>
<protein>
    <recommendedName>
        <fullName evidence="1">Protein-glutamate methylesterase/protein-glutamine glutaminase</fullName>
        <ecNumber evidence="1">3.1.1.61</ecNumber>
        <ecNumber evidence="1">3.5.1.44</ecNumber>
    </recommendedName>
</protein>
<feature type="chain" id="PRO_0000158048" description="Protein-glutamate methylesterase/protein-glutamine glutaminase">
    <location>
        <begin position="1"/>
        <end position="349"/>
    </location>
</feature>
<feature type="domain" description="Response regulatory" evidence="1">
    <location>
        <begin position="2"/>
        <end position="118"/>
    </location>
</feature>
<feature type="domain" description="CheB-type methylesterase" evidence="1">
    <location>
        <begin position="159"/>
        <end position="345"/>
    </location>
</feature>
<feature type="active site" evidence="1">
    <location>
        <position position="164"/>
    </location>
</feature>
<feature type="active site" evidence="1">
    <location>
        <position position="191"/>
    </location>
</feature>
<feature type="active site" evidence="1">
    <location>
        <position position="287"/>
    </location>
</feature>
<feature type="modified residue" description="4-aspartylphosphate" evidence="1">
    <location>
        <position position="52"/>
    </location>
</feature>
<proteinExistence type="inferred from homology"/>
<evidence type="ECO:0000255" key="1">
    <source>
        <dbReference type="HAMAP-Rule" id="MF_00099"/>
    </source>
</evidence>
<comment type="function">
    <text evidence="1">Involved in chemotaxis. Part of a chemotaxis signal transduction system that modulates chemotaxis in response to various stimuli. Catalyzes the demethylation of specific methylglutamate residues introduced into the chemoreceptors (methyl-accepting chemotaxis proteins or MCP) by CheR. Also mediates the irreversible deamidation of specific glutamine residues to glutamic acid.</text>
</comment>
<comment type="catalytic activity">
    <reaction evidence="1">
        <text>[protein]-L-glutamate 5-O-methyl ester + H2O = L-glutamyl-[protein] + methanol + H(+)</text>
        <dbReference type="Rhea" id="RHEA:23236"/>
        <dbReference type="Rhea" id="RHEA-COMP:10208"/>
        <dbReference type="Rhea" id="RHEA-COMP:10311"/>
        <dbReference type="ChEBI" id="CHEBI:15377"/>
        <dbReference type="ChEBI" id="CHEBI:15378"/>
        <dbReference type="ChEBI" id="CHEBI:17790"/>
        <dbReference type="ChEBI" id="CHEBI:29973"/>
        <dbReference type="ChEBI" id="CHEBI:82795"/>
        <dbReference type="EC" id="3.1.1.61"/>
    </reaction>
</comment>
<comment type="catalytic activity">
    <reaction evidence="1">
        <text>L-glutaminyl-[protein] + H2O = L-glutamyl-[protein] + NH4(+)</text>
        <dbReference type="Rhea" id="RHEA:16441"/>
        <dbReference type="Rhea" id="RHEA-COMP:10207"/>
        <dbReference type="Rhea" id="RHEA-COMP:10208"/>
        <dbReference type="ChEBI" id="CHEBI:15377"/>
        <dbReference type="ChEBI" id="CHEBI:28938"/>
        <dbReference type="ChEBI" id="CHEBI:29973"/>
        <dbReference type="ChEBI" id="CHEBI:30011"/>
        <dbReference type="EC" id="3.5.1.44"/>
    </reaction>
</comment>
<comment type="subcellular location">
    <subcellularLocation>
        <location evidence="1">Cytoplasm</location>
    </subcellularLocation>
</comment>
<comment type="domain">
    <text evidence="1">Contains a C-terminal catalytic domain, and an N-terminal region which modulates catalytic activity.</text>
</comment>
<comment type="PTM">
    <text evidence="1">Phosphorylated by CheA. Phosphorylation of the N-terminal regulatory domain activates the methylesterase activity.</text>
</comment>
<comment type="similarity">
    <text evidence="1">Belongs to the CheB family.</text>
</comment>
<keyword id="KW-0145">Chemotaxis</keyword>
<keyword id="KW-0963">Cytoplasm</keyword>
<keyword id="KW-0378">Hydrolase</keyword>
<keyword id="KW-0597">Phosphoprotein</keyword>
<keyword id="KW-1185">Reference proteome</keyword>
<organism>
    <name type="scientific">Archaeoglobus fulgidus (strain ATCC 49558 / DSM 4304 / JCM 9628 / NBRC 100126 / VC-16)</name>
    <dbReference type="NCBI Taxonomy" id="224325"/>
    <lineage>
        <taxon>Archaea</taxon>
        <taxon>Methanobacteriati</taxon>
        <taxon>Methanobacteriota</taxon>
        <taxon>Archaeoglobi</taxon>
        <taxon>Archaeoglobales</taxon>
        <taxon>Archaeoglobaceae</taxon>
        <taxon>Archaeoglobus</taxon>
    </lineage>
</organism>
<gene>
    <name evidence="1" type="primary">cheB</name>
    <name type="ordered locus">AF_1041</name>
</gene>